<feature type="chain" id="PRO_0000395031" description="Transmembrane protein 150C">
    <location>
        <begin position="1"/>
        <end position="249"/>
    </location>
</feature>
<feature type="topological domain" description="Cytoplasmic" evidence="5">
    <location>
        <begin position="1"/>
        <end position="9"/>
    </location>
</feature>
<feature type="transmembrane region" description="Helical" evidence="4">
    <location>
        <begin position="10"/>
        <end position="30"/>
    </location>
</feature>
<feature type="topological domain" description="Extracellular" evidence="5">
    <location>
        <begin position="31"/>
        <end position="64"/>
    </location>
</feature>
<feature type="transmembrane region" description="Helical" evidence="4">
    <location>
        <begin position="65"/>
        <end position="85"/>
    </location>
</feature>
<feature type="topological domain" description="Cytoplasmic" evidence="5">
    <location>
        <begin position="86"/>
        <end position="97"/>
    </location>
</feature>
<feature type="transmembrane region" description="Helical" evidence="4">
    <location>
        <begin position="98"/>
        <end position="118"/>
    </location>
</feature>
<feature type="topological domain" description="Extracellular" evidence="5">
    <location>
        <begin position="119"/>
        <end position="130"/>
    </location>
</feature>
<feature type="transmembrane region" description="Helical" evidence="4">
    <location>
        <begin position="131"/>
        <end position="151"/>
    </location>
</feature>
<feature type="topological domain" description="Cytoplasmic" evidence="5">
    <location>
        <begin position="152"/>
        <end position="168"/>
    </location>
</feature>
<feature type="transmembrane region" description="Helical" evidence="4">
    <location>
        <begin position="169"/>
        <end position="189"/>
    </location>
</feature>
<feature type="topological domain" description="Extracellular" evidence="5">
    <location>
        <begin position="190"/>
        <end position="192"/>
    </location>
</feature>
<feature type="transmembrane region" description="Helical" evidence="4">
    <location>
        <begin position="193"/>
        <end position="213"/>
    </location>
</feature>
<feature type="topological domain" description="Cytoplasmic" evidence="2">
    <location>
        <begin position="214"/>
        <end position="249"/>
    </location>
</feature>
<feature type="sequence conflict" description="In Ref. 2; AAI26660." evidence="5" ref="2">
    <original>S</original>
    <variation>P</variation>
    <location>
        <position position="173"/>
    </location>
</feature>
<accession>A5D7C9</accession>
<accession>A0JNF6</accession>
<comment type="function">
    <text evidence="3">Nonselective cationic channel with high permeability to Ca(2+). Component of a mechanosensitive cation channel. Confers mechanically activated (MA) currents with slow inactivation kinetics. May contribute to proprioception.</text>
</comment>
<comment type="catalytic activity">
    <reaction evidence="3">
        <text>Ca(2+)(in) = Ca(2+)(out)</text>
        <dbReference type="Rhea" id="RHEA:29671"/>
        <dbReference type="ChEBI" id="CHEBI:29108"/>
    </reaction>
</comment>
<comment type="catalytic activity">
    <reaction evidence="3">
        <text>Na(+)(in) = Na(+)(out)</text>
        <dbReference type="Rhea" id="RHEA:34963"/>
        <dbReference type="ChEBI" id="CHEBI:29101"/>
    </reaction>
</comment>
<comment type="catalytic activity">
    <reaction evidence="3">
        <text>K(+)(in) = K(+)(out)</text>
        <dbReference type="Rhea" id="RHEA:29463"/>
        <dbReference type="ChEBI" id="CHEBI:29103"/>
    </reaction>
</comment>
<comment type="catalytic activity">
    <reaction evidence="3">
        <text>Mg(2+)(in) = Mg(2+)(out)</text>
        <dbReference type="Rhea" id="RHEA:29827"/>
        <dbReference type="ChEBI" id="CHEBI:18420"/>
    </reaction>
</comment>
<comment type="subcellular location">
    <subcellularLocation>
        <location evidence="1">Cell membrane</location>
        <topology evidence="1">Multi-pass membrane protein</topology>
    </subcellularLocation>
    <subcellularLocation>
        <location evidence="1">Lysosome membrane</location>
        <topology evidence="1">Multi-pass membrane protein</topology>
    </subcellularLocation>
    <text evidence="1">Localizes at the plasma membrane. A portion co-localizes with LAMP1 lysosomal marker.</text>
</comment>
<comment type="miscellaneous">
    <text>Tentonin comes from the Greek 'tentono' meaning to stretch.</text>
</comment>
<comment type="similarity">
    <text evidence="5">Belongs to the DRAM/TMEM150 family.</text>
</comment>
<dbReference type="EMBL" id="AAFC03076179">
    <property type="status" value="NOT_ANNOTATED_CDS"/>
    <property type="molecule type" value="Genomic_DNA"/>
</dbReference>
<dbReference type="EMBL" id="BC126659">
    <property type="protein sequence ID" value="AAI26660.1"/>
    <property type="molecule type" value="mRNA"/>
</dbReference>
<dbReference type="EMBL" id="BC140510">
    <property type="protein sequence ID" value="AAI40511.1"/>
    <property type="molecule type" value="mRNA"/>
</dbReference>
<dbReference type="RefSeq" id="NP_001071469.1">
    <property type="nucleotide sequence ID" value="NM_001078001.1"/>
</dbReference>
<dbReference type="RefSeq" id="XP_024849071.1">
    <property type="nucleotide sequence ID" value="XM_024993303.2"/>
</dbReference>
<dbReference type="RefSeq" id="XP_024849072.1">
    <property type="nucleotide sequence ID" value="XM_024993304.2"/>
</dbReference>
<dbReference type="FunCoup" id="A5D7C9">
    <property type="interactions" value="466"/>
</dbReference>
<dbReference type="STRING" id="9913.ENSBTAP00000069135"/>
<dbReference type="PaxDb" id="9913-ENSBTAP00000043567"/>
<dbReference type="Ensembl" id="ENSBTAT00000080009.1">
    <property type="protein sequence ID" value="ENSBTAP00000069135.1"/>
    <property type="gene ID" value="ENSBTAG00000032588.5"/>
</dbReference>
<dbReference type="GeneID" id="534560"/>
<dbReference type="KEGG" id="bta:534560"/>
<dbReference type="CTD" id="441027"/>
<dbReference type="VEuPathDB" id="HostDB:ENSBTAG00000032588"/>
<dbReference type="VGNC" id="VGNC:35982">
    <property type="gene designation" value="TMEM150C"/>
</dbReference>
<dbReference type="eggNOG" id="KOG4320">
    <property type="taxonomic scope" value="Eukaryota"/>
</dbReference>
<dbReference type="GeneTree" id="ENSGT01030000234578"/>
<dbReference type="HOGENOM" id="CLU_059992_0_1_1"/>
<dbReference type="InParanoid" id="A5D7C9"/>
<dbReference type="OMA" id="VYFIAVY"/>
<dbReference type="OrthoDB" id="9865811at2759"/>
<dbReference type="TreeFam" id="TF314508"/>
<dbReference type="Proteomes" id="UP000009136">
    <property type="component" value="Chromosome 6"/>
</dbReference>
<dbReference type="Bgee" id="ENSBTAG00000032588">
    <property type="expression patterns" value="Expressed in mammary gland fat and 101 other cell types or tissues"/>
</dbReference>
<dbReference type="GO" id="GO:0005765">
    <property type="term" value="C:lysosomal membrane"/>
    <property type="evidence" value="ECO:0007669"/>
    <property type="project" value="UniProtKB-SubCell"/>
</dbReference>
<dbReference type="GO" id="GO:0005886">
    <property type="term" value="C:plasma membrane"/>
    <property type="evidence" value="ECO:0000250"/>
    <property type="project" value="UniProtKB"/>
</dbReference>
<dbReference type="GO" id="GO:0140135">
    <property type="term" value="F:mechanosensitive monoatomic cation channel activity"/>
    <property type="evidence" value="ECO:0000250"/>
    <property type="project" value="UniProtKB"/>
</dbReference>
<dbReference type="GO" id="GO:0071260">
    <property type="term" value="P:cellular response to mechanical stimulus"/>
    <property type="evidence" value="ECO:0000250"/>
    <property type="project" value="UniProtKB"/>
</dbReference>
<dbReference type="GO" id="GO:0019230">
    <property type="term" value="P:proprioception"/>
    <property type="evidence" value="ECO:0000250"/>
    <property type="project" value="UniProtKB"/>
</dbReference>
<dbReference type="InterPro" id="IPR050911">
    <property type="entry name" value="DRAM/TMEM150_Autophagy_Mod"/>
</dbReference>
<dbReference type="InterPro" id="IPR019402">
    <property type="entry name" value="Frag1/DRAM/Sfk1"/>
</dbReference>
<dbReference type="PANTHER" id="PTHR21324">
    <property type="entry name" value="FASTING-INDUCIBLE INTEGRAL MEMBRANE PROTEIN TM6P1-RELATED"/>
    <property type="match status" value="1"/>
</dbReference>
<dbReference type="PANTHER" id="PTHR21324:SF7">
    <property type="entry name" value="TRANSMEMBRANE PROTEIN 150C"/>
    <property type="match status" value="1"/>
</dbReference>
<dbReference type="Pfam" id="PF10277">
    <property type="entry name" value="Frag1"/>
    <property type="match status" value="1"/>
</dbReference>
<sequence>MDGKKCSVWMFLPLVFTVFTSAGLWIVYFIAVEDDKIFPLNSAERKPGVKHAPYISIAGDEPPASCVFSQVMNMAAFLALVVAVLRFIQLKPKVLNPWLNISGLVALCLASFGMTLLGNFQLTNDEEIHNVGTSLTFGFGTLTCWIQAALTLKVNIKNEGRKVGIPRVILSASITLCVVLYFILMAQGIHMYAARVQWGLVMCFLSYFGTFAVEFRHYRYEIVCSEYQENFLSFSESLSEASEYQTDQV</sequence>
<protein>
    <recommendedName>
        <fullName>Transmembrane protein 150C</fullName>
    </recommendedName>
</protein>
<name>T150C_BOVIN</name>
<organism>
    <name type="scientific">Bos taurus</name>
    <name type="common">Bovine</name>
    <dbReference type="NCBI Taxonomy" id="9913"/>
    <lineage>
        <taxon>Eukaryota</taxon>
        <taxon>Metazoa</taxon>
        <taxon>Chordata</taxon>
        <taxon>Craniata</taxon>
        <taxon>Vertebrata</taxon>
        <taxon>Euteleostomi</taxon>
        <taxon>Mammalia</taxon>
        <taxon>Eutheria</taxon>
        <taxon>Laurasiatheria</taxon>
        <taxon>Artiodactyla</taxon>
        <taxon>Ruminantia</taxon>
        <taxon>Pecora</taxon>
        <taxon>Bovidae</taxon>
        <taxon>Bovinae</taxon>
        <taxon>Bos</taxon>
    </lineage>
</organism>
<gene>
    <name type="primary">TMEM150C</name>
</gene>
<keyword id="KW-1003">Cell membrane</keyword>
<keyword id="KW-0458">Lysosome</keyword>
<keyword id="KW-0472">Membrane</keyword>
<keyword id="KW-1185">Reference proteome</keyword>
<keyword id="KW-0812">Transmembrane</keyword>
<keyword id="KW-1133">Transmembrane helix</keyword>
<evidence type="ECO:0000250" key="1">
    <source>
        <dbReference type="UniProtKB" id="B9EJG8"/>
    </source>
</evidence>
<evidence type="ECO:0000250" key="2">
    <source>
        <dbReference type="UniProtKB" id="Q86TG1"/>
    </source>
</evidence>
<evidence type="ECO:0000250" key="3">
    <source>
        <dbReference type="UniProtKB" id="Q8C8S3"/>
    </source>
</evidence>
<evidence type="ECO:0000255" key="4"/>
<evidence type="ECO:0000305" key="5"/>
<reference key="1">
    <citation type="journal article" date="2009" name="Science">
        <title>The genome sequence of taurine cattle: a window to ruminant biology and evolution.</title>
        <authorList>
            <consortium name="The bovine genome sequencing and analysis consortium"/>
        </authorList>
    </citation>
    <scope>NUCLEOTIDE SEQUENCE [LARGE SCALE GENOMIC DNA]</scope>
    <source>
        <strain>Hereford</strain>
    </source>
</reference>
<reference key="2">
    <citation type="submission" date="2007-04" db="EMBL/GenBank/DDBJ databases">
        <authorList>
            <consortium name="NIH - Mammalian Gene Collection (MGC) project"/>
        </authorList>
    </citation>
    <scope>NUCLEOTIDE SEQUENCE [LARGE SCALE MRNA]</scope>
    <source>
        <tissue>Hypothalamus</tissue>
    </source>
</reference>
<proteinExistence type="evidence at transcript level"/>